<sequence length="340" mass="37913">MRVEEFDYTLPEERIATYPPAERGSTRLIVLDRAADSITHSVYASLHERLRPGDLLVLNNSKVIRARLIANKPTGGRIELMLLEKHEGVQNLALYRGRLKVGDRLLAHGAELTVEALPDHGVARLSCDTANLTELFEAHGSVPIPPYLKRDAEEVDRERYQTVFAELPGSVAAPTASLNLTDELLEKIKAKGVDVVHITLHVGLGTFLPIRSETFEEHVMHREFYNIPESSAHKIGEAKARGGRVVAVGTTVTRALEHAAPRLLDSDFSQEVSGEADIFIYPGYEFRIIDALLTNFHAPRSTVLMLTAAFAGKELLRRAYQEALERDYRFLSYGDSMFIS</sequence>
<protein>
    <recommendedName>
        <fullName evidence="1">S-adenosylmethionine:tRNA ribosyltransferase-isomerase</fullName>
        <ecNumber evidence="1">2.4.99.17</ecNumber>
    </recommendedName>
    <alternativeName>
        <fullName evidence="1">Queuosine biosynthesis protein QueA</fullName>
    </alternativeName>
</protein>
<name>QUEA_CHLP8</name>
<reference key="1">
    <citation type="submission" date="2008-06" db="EMBL/GenBank/DDBJ databases">
        <title>Complete sequence of Chlorobaculum parvum NCIB 8327.</title>
        <authorList>
            <consortium name="US DOE Joint Genome Institute"/>
            <person name="Lucas S."/>
            <person name="Copeland A."/>
            <person name="Lapidus A."/>
            <person name="Glavina del Rio T."/>
            <person name="Dalin E."/>
            <person name="Tice H."/>
            <person name="Bruce D."/>
            <person name="Goodwin L."/>
            <person name="Pitluck S."/>
            <person name="Schmutz J."/>
            <person name="Larimer F."/>
            <person name="Land M."/>
            <person name="Hauser L."/>
            <person name="Kyrpides N."/>
            <person name="Mikhailova N."/>
            <person name="Zhao F."/>
            <person name="Li T."/>
            <person name="Liu Z."/>
            <person name="Overmann J."/>
            <person name="Bryant D.A."/>
            <person name="Richardson P."/>
        </authorList>
    </citation>
    <scope>NUCLEOTIDE SEQUENCE [LARGE SCALE GENOMIC DNA]</scope>
    <source>
        <strain>DSM 263 / NCIMB 8327</strain>
    </source>
</reference>
<keyword id="KW-0963">Cytoplasm</keyword>
<keyword id="KW-0671">Queuosine biosynthesis</keyword>
<keyword id="KW-0949">S-adenosyl-L-methionine</keyword>
<keyword id="KW-0808">Transferase</keyword>
<dbReference type="EC" id="2.4.99.17" evidence="1"/>
<dbReference type="EMBL" id="CP001099">
    <property type="protein sequence ID" value="ACF11838.1"/>
    <property type="molecule type" value="Genomic_DNA"/>
</dbReference>
<dbReference type="RefSeq" id="WP_012502671.1">
    <property type="nucleotide sequence ID" value="NC_011027.1"/>
</dbReference>
<dbReference type="SMR" id="B3QPI5"/>
<dbReference type="STRING" id="517417.Cpar_1439"/>
<dbReference type="KEGG" id="cpc:Cpar_1439"/>
<dbReference type="eggNOG" id="COG0809">
    <property type="taxonomic scope" value="Bacteria"/>
</dbReference>
<dbReference type="HOGENOM" id="CLU_039110_1_0_10"/>
<dbReference type="OrthoDB" id="9805933at2"/>
<dbReference type="UniPathway" id="UPA00392"/>
<dbReference type="Proteomes" id="UP000008811">
    <property type="component" value="Chromosome"/>
</dbReference>
<dbReference type="GO" id="GO:0005737">
    <property type="term" value="C:cytoplasm"/>
    <property type="evidence" value="ECO:0007669"/>
    <property type="project" value="UniProtKB-SubCell"/>
</dbReference>
<dbReference type="GO" id="GO:0051075">
    <property type="term" value="F:S-adenosylmethionine:tRNA ribosyltransferase-isomerase activity"/>
    <property type="evidence" value="ECO:0007669"/>
    <property type="project" value="UniProtKB-EC"/>
</dbReference>
<dbReference type="GO" id="GO:0008616">
    <property type="term" value="P:queuosine biosynthetic process"/>
    <property type="evidence" value="ECO:0007669"/>
    <property type="project" value="UniProtKB-UniRule"/>
</dbReference>
<dbReference type="GO" id="GO:0002099">
    <property type="term" value="P:tRNA wobble guanine modification"/>
    <property type="evidence" value="ECO:0007669"/>
    <property type="project" value="TreeGrafter"/>
</dbReference>
<dbReference type="FunFam" id="3.40.1780.10:FF:000001">
    <property type="entry name" value="S-adenosylmethionine:tRNA ribosyltransferase-isomerase"/>
    <property type="match status" value="1"/>
</dbReference>
<dbReference type="Gene3D" id="2.40.10.240">
    <property type="entry name" value="QueA-like"/>
    <property type="match status" value="1"/>
</dbReference>
<dbReference type="Gene3D" id="3.40.1780.10">
    <property type="entry name" value="QueA-like"/>
    <property type="match status" value="1"/>
</dbReference>
<dbReference type="HAMAP" id="MF_00113">
    <property type="entry name" value="QueA"/>
    <property type="match status" value="1"/>
</dbReference>
<dbReference type="InterPro" id="IPR003699">
    <property type="entry name" value="QueA"/>
</dbReference>
<dbReference type="InterPro" id="IPR042118">
    <property type="entry name" value="QueA_dom1"/>
</dbReference>
<dbReference type="InterPro" id="IPR042119">
    <property type="entry name" value="QueA_dom2"/>
</dbReference>
<dbReference type="InterPro" id="IPR036100">
    <property type="entry name" value="QueA_sf"/>
</dbReference>
<dbReference type="NCBIfam" id="NF001140">
    <property type="entry name" value="PRK00147.1"/>
    <property type="match status" value="1"/>
</dbReference>
<dbReference type="NCBIfam" id="TIGR00113">
    <property type="entry name" value="queA"/>
    <property type="match status" value="1"/>
</dbReference>
<dbReference type="PANTHER" id="PTHR30307">
    <property type="entry name" value="S-ADENOSYLMETHIONINE:TRNA RIBOSYLTRANSFERASE-ISOMERASE"/>
    <property type="match status" value="1"/>
</dbReference>
<dbReference type="PANTHER" id="PTHR30307:SF0">
    <property type="entry name" value="S-ADENOSYLMETHIONINE:TRNA RIBOSYLTRANSFERASE-ISOMERASE"/>
    <property type="match status" value="1"/>
</dbReference>
<dbReference type="Pfam" id="PF02547">
    <property type="entry name" value="Queuosine_synth"/>
    <property type="match status" value="1"/>
</dbReference>
<dbReference type="SUPFAM" id="SSF111337">
    <property type="entry name" value="QueA-like"/>
    <property type="match status" value="1"/>
</dbReference>
<comment type="function">
    <text evidence="1">Transfers and isomerizes the ribose moiety from AdoMet to the 7-aminomethyl group of 7-deazaguanine (preQ1-tRNA) to give epoxyqueuosine (oQ-tRNA).</text>
</comment>
<comment type="catalytic activity">
    <reaction evidence="1">
        <text>7-aminomethyl-7-carbaguanosine(34) in tRNA + S-adenosyl-L-methionine = epoxyqueuosine(34) in tRNA + adenine + L-methionine + 2 H(+)</text>
        <dbReference type="Rhea" id="RHEA:32155"/>
        <dbReference type="Rhea" id="RHEA-COMP:10342"/>
        <dbReference type="Rhea" id="RHEA-COMP:18582"/>
        <dbReference type="ChEBI" id="CHEBI:15378"/>
        <dbReference type="ChEBI" id="CHEBI:16708"/>
        <dbReference type="ChEBI" id="CHEBI:57844"/>
        <dbReference type="ChEBI" id="CHEBI:59789"/>
        <dbReference type="ChEBI" id="CHEBI:82833"/>
        <dbReference type="ChEBI" id="CHEBI:194443"/>
        <dbReference type="EC" id="2.4.99.17"/>
    </reaction>
</comment>
<comment type="pathway">
    <text evidence="1">tRNA modification; tRNA-queuosine biosynthesis.</text>
</comment>
<comment type="subunit">
    <text evidence="1">Monomer.</text>
</comment>
<comment type="subcellular location">
    <subcellularLocation>
        <location evidence="1">Cytoplasm</location>
    </subcellularLocation>
</comment>
<comment type="similarity">
    <text evidence="1">Belongs to the QueA family.</text>
</comment>
<evidence type="ECO:0000255" key="1">
    <source>
        <dbReference type="HAMAP-Rule" id="MF_00113"/>
    </source>
</evidence>
<organism>
    <name type="scientific">Chlorobaculum parvum (strain DSM 263 / NCIMB 8327)</name>
    <name type="common">Chlorobium vibrioforme subsp. thiosulfatophilum</name>
    <dbReference type="NCBI Taxonomy" id="517417"/>
    <lineage>
        <taxon>Bacteria</taxon>
        <taxon>Pseudomonadati</taxon>
        <taxon>Chlorobiota</taxon>
        <taxon>Chlorobiia</taxon>
        <taxon>Chlorobiales</taxon>
        <taxon>Chlorobiaceae</taxon>
        <taxon>Chlorobaculum</taxon>
    </lineage>
</organism>
<gene>
    <name evidence="1" type="primary">queA</name>
    <name type="ordered locus">Cpar_1439</name>
</gene>
<feature type="chain" id="PRO_1000094763" description="S-adenosylmethionine:tRNA ribosyltransferase-isomerase">
    <location>
        <begin position="1"/>
        <end position="340"/>
    </location>
</feature>
<accession>B3QPI5</accession>
<proteinExistence type="inferred from homology"/>